<protein>
    <recommendedName>
        <fullName evidence="1">Shikimate dehydrogenase (NADP(+))</fullName>
        <shortName evidence="1">SDH</shortName>
        <ecNumber evidence="1">1.1.1.25</ecNumber>
    </recommendedName>
</protein>
<name>AROE_HALMA</name>
<reference key="1">
    <citation type="journal article" date="2004" name="Genome Res.">
        <title>Genome sequence of Haloarcula marismortui: a halophilic archaeon from the Dead Sea.</title>
        <authorList>
            <person name="Baliga N.S."/>
            <person name="Bonneau R."/>
            <person name="Facciotti M.T."/>
            <person name="Pan M."/>
            <person name="Glusman G."/>
            <person name="Deutsch E.W."/>
            <person name="Shannon P."/>
            <person name="Chiu Y."/>
            <person name="Weng R.S."/>
            <person name="Gan R.R."/>
            <person name="Hung P."/>
            <person name="Date S.V."/>
            <person name="Marcotte E."/>
            <person name="Hood L."/>
            <person name="Ng W.V."/>
        </authorList>
    </citation>
    <scope>NUCLEOTIDE SEQUENCE [LARGE SCALE GENOMIC DNA]</scope>
    <source>
        <strain>ATCC 43049 / DSM 3752 / JCM 8966 / VKM B-1809</strain>
    </source>
</reference>
<sequence length="265" mass="27384">MDVYGLIGNPVGHSLSPPMHEAGYEALGLDARYVTFEPPADAGAEAIEAAETLGVDGLNVTIPFKQDVLDAVDPAPLAERIGAVNTVDFTGGTPTGYNTDAVGAVRALDHHDVSLSGTAVVVGAGGAGRAVAFGLADEGLSVRIANRTESKADALADEVPDASGHGLDSLSDLLANADILVNCTSVGMEEDKTPVPADALHSDLAVLDAVYTPIETRLLQDAAAAGATTVDGAWMLLYQGVEAFERWTGEDAPVDRMNGRLREHL</sequence>
<dbReference type="EC" id="1.1.1.25" evidence="1"/>
<dbReference type="EMBL" id="AY596297">
    <property type="protein sequence ID" value="AAV45702.1"/>
    <property type="molecule type" value="Genomic_DNA"/>
</dbReference>
<dbReference type="RefSeq" id="WP_007190460.1">
    <property type="nucleotide sequence ID" value="NZ_CP039138.1"/>
</dbReference>
<dbReference type="SMR" id="Q5V450"/>
<dbReference type="STRING" id="272569.rrnAC0707"/>
<dbReference type="PaxDb" id="272569-rrnAC0707"/>
<dbReference type="EnsemblBacteria" id="AAV45702">
    <property type="protein sequence ID" value="AAV45702"/>
    <property type="gene ID" value="rrnAC0707"/>
</dbReference>
<dbReference type="KEGG" id="hma:rrnAC0707"/>
<dbReference type="PATRIC" id="fig|272569.17.peg.1452"/>
<dbReference type="eggNOG" id="arCOG01033">
    <property type="taxonomic scope" value="Archaea"/>
</dbReference>
<dbReference type="HOGENOM" id="CLU_044063_1_1_2"/>
<dbReference type="UniPathway" id="UPA00053">
    <property type="reaction ID" value="UER00087"/>
</dbReference>
<dbReference type="Proteomes" id="UP000001169">
    <property type="component" value="Chromosome I"/>
</dbReference>
<dbReference type="GO" id="GO:0050661">
    <property type="term" value="F:NADP binding"/>
    <property type="evidence" value="ECO:0007669"/>
    <property type="project" value="InterPro"/>
</dbReference>
<dbReference type="GO" id="GO:0004764">
    <property type="term" value="F:shikimate 3-dehydrogenase (NADP+) activity"/>
    <property type="evidence" value="ECO:0007669"/>
    <property type="project" value="UniProtKB-UniRule"/>
</dbReference>
<dbReference type="GO" id="GO:0008652">
    <property type="term" value="P:amino acid biosynthetic process"/>
    <property type="evidence" value="ECO:0007669"/>
    <property type="project" value="UniProtKB-KW"/>
</dbReference>
<dbReference type="GO" id="GO:0009073">
    <property type="term" value="P:aromatic amino acid family biosynthetic process"/>
    <property type="evidence" value="ECO:0007669"/>
    <property type="project" value="UniProtKB-KW"/>
</dbReference>
<dbReference type="GO" id="GO:0009423">
    <property type="term" value="P:chorismate biosynthetic process"/>
    <property type="evidence" value="ECO:0007669"/>
    <property type="project" value="UniProtKB-UniRule"/>
</dbReference>
<dbReference type="GO" id="GO:0019632">
    <property type="term" value="P:shikimate metabolic process"/>
    <property type="evidence" value="ECO:0007669"/>
    <property type="project" value="InterPro"/>
</dbReference>
<dbReference type="CDD" id="cd01065">
    <property type="entry name" value="NAD_bind_Shikimate_DH"/>
    <property type="match status" value="1"/>
</dbReference>
<dbReference type="FunFam" id="3.40.50.720:FF:000086">
    <property type="entry name" value="Quinate/shikimate dehydrogenase"/>
    <property type="match status" value="1"/>
</dbReference>
<dbReference type="Gene3D" id="3.40.50.10860">
    <property type="entry name" value="Leucine Dehydrogenase, chain A, domain 1"/>
    <property type="match status" value="1"/>
</dbReference>
<dbReference type="Gene3D" id="3.40.50.720">
    <property type="entry name" value="NAD(P)-binding Rossmann-like Domain"/>
    <property type="match status" value="1"/>
</dbReference>
<dbReference type="HAMAP" id="MF_00222">
    <property type="entry name" value="Shikimate_DH_AroE"/>
    <property type="match status" value="1"/>
</dbReference>
<dbReference type="InterPro" id="IPR046346">
    <property type="entry name" value="Aminoacid_DH-like_N_sf"/>
</dbReference>
<dbReference type="InterPro" id="IPR036291">
    <property type="entry name" value="NAD(P)-bd_dom_sf"/>
</dbReference>
<dbReference type="InterPro" id="IPR041121">
    <property type="entry name" value="SDH_C"/>
</dbReference>
<dbReference type="InterPro" id="IPR011342">
    <property type="entry name" value="Shikimate_DH"/>
</dbReference>
<dbReference type="InterPro" id="IPR013708">
    <property type="entry name" value="Shikimate_DH-bd_N"/>
</dbReference>
<dbReference type="InterPro" id="IPR022893">
    <property type="entry name" value="Shikimate_DH_fam"/>
</dbReference>
<dbReference type="InterPro" id="IPR006151">
    <property type="entry name" value="Shikm_DH/Glu-tRNA_Rdtase"/>
</dbReference>
<dbReference type="NCBIfam" id="TIGR00507">
    <property type="entry name" value="aroE"/>
    <property type="match status" value="1"/>
</dbReference>
<dbReference type="NCBIfam" id="NF001319">
    <property type="entry name" value="PRK00258.3-3"/>
    <property type="match status" value="1"/>
</dbReference>
<dbReference type="PANTHER" id="PTHR21089:SF1">
    <property type="entry name" value="BIFUNCTIONAL 3-DEHYDROQUINATE DEHYDRATASE_SHIKIMATE DEHYDROGENASE, CHLOROPLASTIC"/>
    <property type="match status" value="1"/>
</dbReference>
<dbReference type="PANTHER" id="PTHR21089">
    <property type="entry name" value="SHIKIMATE DEHYDROGENASE"/>
    <property type="match status" value="1"/>
</dbReference>
<dbReference type="Pfam" id="PF18317">
    <property type="entry name" value="SDH_C"/>
    <property type="match status" value="1"/>
</dbReference>
<dbReference type="Pfam" id="PF01488">
    <property type="entry name" value="Shikimate_DH"/>
    <property type="match status" value="1"/>
</dbReference>
<dbReference type="Pfam" id="PF08501">
    <property type="entry name" value="Shikimate_dh_N"/>
    <property type="match status" value="1"/>
</dbReference>
<dbReference type="SUPFAM" id="SSF53223">
    <property type="entry name" value="Aminoacid dehydrogenase-like, N-terminal domain"/>
    <property type="match status" value="1"/>
</dbReference>
<dbReference type="SUPFAM" id="SSF51735">
    <property type="entry name" value="NAD(P)-binding Rossmann-fold domains"/>
    <property type="match status" value="1"/>
</dbReference>
<proteinExistence type="inferred from homology"/>
<organism>
    <name type="scientific">Haloarcula marismortui (strain ATCC 43049 / DSM 3752 / JCM 8966 / VKM B-1809)</name>
    <name type="common">Halobacterium marismortui</name>
    <dbReference type="NCBI Taxonomy" id="272569"/>
    <lineage>
        <taxon>Archaea</taxon>
        <taxon>Methanobacteriati</taxon>
        <taxon>Methanobacteriota</taxon>
        <taxon>Stenosarchaea group</taxon>
        <taxon>Halobacteria</taxon>
        <taxon>Halobacteriales</taxon>
        <taxon>Haloarculaceae</taxon>
        <taxon>Haloarcula</taxon>
    </lineage>
</organism>
<gene>
    <name evidence="1" type="primary">aroE</name>
    <name type="ordered locus">rrnAC0707</name>
</gene>
<evidence type="ECO:0000255" key="1">
    <source>
        <dbReference type="HAMAP-Rule" id="MF_00222"/>
    </source>
</evidence>
<comment type="function">
    <text evidence="1">Involved in the biosynthesis of the chorismate, which leads to the biosynthesis of aromatic amino acids. Catalyzes the reversible NADPH linked reduction of 3-dehydroshikimate (DHSA) to yield shikimate (SA).</text>
</comment>
<comment type="catalytic activity">
    <reaction evidence="1">
        <text>shikimate + NADP(+) = 3-dehydroshikimate + NADPH + H(+)</text>
        <dbReference type="Rhea" id="RHEA:17737"/>
        <dbReference type="ChEBI" id="CHEBI:15378"/>
        <dbReference type="ChEBI" id="CHEBI:16630"/>
        <dbReference type="ChEBI" id="CHEBI:36208"/>
        <dbReference type="ChEBI" id="CHEBI:57783"/>
        <dbReference type="ChEBI" id="CHEBI:58349"/>
        <dbReference type="EC" id="1.1.1.25"/>
    </reaction>
</comment>
<comment type="pathway">
    <text evidence="1">Metabolic intermediate biosynthesis; chorismate biosynthesis; chorismate from D-erythrose 4-phosphate and phosphoenolpyruvate: step 4/7.</text>
</comment>
<comment type="subunit">
    <text evidence="1">Homodimer.</text>
</comment>
<comment type="similarity">
    <text evidence="1">Belongs to the shikimate dehydrogenase family.</text>
</comment>
<keyword id="KW-0028">Amino-acid biosynthesis</keyword>
<keyword id="KW-0057">Aromatic amino acid biosynthesis</keyword>
<keyword id="KW-0521">NADP</keyword>
<keyword id="KW-0560">Oxidoreductase</keyword>
<keyword id="KW-1185">Reference proteome</keyword>
<feature type="chain" id="PRO_1000021288" description="Shikimate dehydrogenase (NADP(+))">
    <location>
        <begin position="1"/>
        <end position="265"/>
    </location>
</feature>
<feature type="active site" description="Proton acceptor" evidence="1">
    <location>
        <position position="65"/>
    </location>
</feature>
<feature type="binding site" evidence="1">
    <location>
        <begin position="14"/>
        <end position="16"/>
    </location>
    <ligand>
        <name>shikimate</name>
        <dbReference type="ChEBI" id="CHEBI:36208"/>
    </ligand>
</feature>
<feature type="binding site" evidence="1">
    <location>
        <position position="61"/>
    </location>
    <ligand>
        <name>shikimate</name>
        <dbReference type="ChEBI" id="CHEBI:36208"/>
    </ligand>
</feature>
<feature type="binding site" evidence="1">
    <location>
        <position position="85"/>
    </location>
    <ligand>
        <name>shikimate</name>
        <dbReference type="ChEBI" id="CHEBI:36208"/>
    </ligand>
</feature>
<feature type="binding site" evidence="1">
    <location>
        <position position="100"/>
    </location>
    <ligand>
        <name>shikimate</name>
        <dbReference type="ChEBI" id="CHEBI:36208"/>
    </ligand>
</feature>
<feature type="binding site" evidence="1">
    <location>
        <begin position="123"/>
        <end position="127"/>
    </location>
    <ligand>
        <name>NADP(+)</name>
        <dbReference type="ChEBI" id="CHEBI:58349"/>
    </ligand>
</feature>
<feature type="binding site" evidence="1">
    <location>
        <begin position="146"/>
        <end position="151"/>
    </location>
    <ligand>
        <name>NADP(+)</name>
        <dbReference type="ChEBI" id="CHEBI:58349"/>
    </ligand>
</feature>
<feature type="binding site" evidence="1">
    <location>
        <position position="209"/>
    </location>
    <ligand>
        <name>NADP(+)</name>
        <dbReference type="ChEBI" id="CHEBI:58349"/>
    </ligand>
</feature>
<feature type="binding site" evidence="1">
    <location>
        <position position="211"/>
    </location>
    <ligand>
        <name>shikimate</name>
        <dbReference type="ChEBI" id="CHEBI:36208"/>
    </ligand>
</feature>
<feature type="binding site" evidence="1">
    <location>
        <position position="232"/>
    </location>
    <ligand>
        <name>NADP(+)</name>
        <dbReference type="ChEBI" id="CHEBI:58349"/>
    </ligand>
</feature>
<accession>Q5V450</accession>